<comment type="function">
    <text evidence="1 9 10 11 13">Choline transporter that plays a role in the choline-acetylcholine system and is required to the efferent innervation of hair cells in the olivocochlear bundle for the maintenance of physiological function of outer hair cells and the protection of hair cells from acoustic injury (By similarity) (PubMed:23651124, PubMed:28013291). Also described as a thiamine pyrophosphate transporter in colon, may mediate the absorption of microbiota-generated thiamine pyrophosphate and contribute to host thiamine (vitamin B1) homeostasis (PubMed:24379411, PubMed:26741288).</text>
</comment>
<comment type="function">
    <molecule>Isoform 3</molecule>
    <text evidence="10">Also has thiamine pyrophosphate transporter activity.</text>
</comment>
<comment type="catalytic activity">
    <reaction evidence="9 13">
        <text>choline(out) + n H(+)(in) = choline(in) + n H(+)(out)</text>
        <dbReference type="Rhea" id="RHEA:75463"/>
        <dbReference type="ChEBI" id="CHEBI:15354"/>
        <dbReference type="ChEBI" id="CHEBI:15378"/>
    </reaction>
</comment>
<comment type="catalytic activity">
    <reaction evidence="10 11">
        <text>thiamine diphosphate(out) = thiamine diphosphate(in)</text>
        <dbReference type="Rhea" id="RHEA:75471"/>
        <dbReference type="ChEBI" id="CHEBI:58937"/>
    </reaction>
</comment>
<comment type="biophysicochemical properties">
    <kinetics>
        <KM evidence="10">0.17 uM for thiamine pyrophosphate</KM>
        <Vmax evidence="10">18.19 pmol/min/mg enzyme</Vmax>
    </kinetics>
</comment>
<comment type="subcellular location">
    <subcellularLocation>
        <location evidence="10 12">Membrane</location>
        <topology evidence="22 23">Multi-pass membrane protein</topology>
    </subcellularLocation>
    <subcellularLocation>
        <location evidence="10">Apical cell membrane</location>
    </subcellularLocation>
</comment>
<comment type="alternative products">
    <event type="alternative splicing"/>
    <isoform>
        <id>Q53GD3-1</id>
        <name>1</name>
        <sequence type="displayed"/>
    </isoform>
    <isoform>
        <id>Q53GD3-2</id>
        <name>2</name>
        <sequence type="described" ref="VSP_030998"/>
    </isoform>
    <isoform>
        <id>Q53GD3-3</id>
        <name>3</name>
        <sequence type="described" ref="VSP_046236"/>
    </isoform>
    <isoform>
        <id>Q53GD3-4</id>
        <name>4</name>
        <sequence type="described" ref="VSP_046821"/>
    </isoform>
</comment>
<comment type="tissue specificity">
    <text evidence="10">Highly expressed in colon, also detected in prostate, trachea and lung (PubMed:24379411). Isoform 3 is also expressed in colon but a lower levels (PubMed:24379411).</text>
</comment>
<comment type="tissue specificity">
    <molecule>Isoform 3</molecule>
    <text evidence="10">Expressed in colon at low levels.</text>
</comment>
<comment type="PTM">
    <text evidence="12">N-glycosylated; N-glycosylation of Asn-69, Asn-155 and Asn-393 is required for a proper thiamine pyrophosphate uptake.</text>
</comment>
<comment type="disease">
    <text evidence="3">An interstitial deletion causing the fusion of exon 10 of CTL4 with the 3'-UTR of NEU has been detected in two patients affected by sialidosis.</text>
</comment>
<comment type="disease" evidence="13">
    <disease id="DI-05059">
        <name>Deafness, autosomal dominant, 72</name>
        <acronym>DFNA72</acronym>
        <description>A form of non-syndromic sensorineural hearing loss. Sensorineural deafness results from damage to the neural receptors of the inner ear, the nerve pathways to the brain, or the area of the brain that receives sound information. DFNA72 primarily affects the middle frequencies. It gradually progresses to whole-frequency hearing loss.</description>
        <dbReference type="MIM" id="617606"/>
    </disease>
    <text>The disease is caused by variants affecting the gene represented in this entry.</text>
</comment>
<comment type="similarity">
    <text evidence="21">Belongs to the CTL (choline transporter-like) family.</text>
</comment>
<gene>
    <name evidence="24" type="primary">SLC44A4</name>
    <name type="synonym">C6orf29</name>
    <name evidence="19" type="synonym">CTL4</name>
    <name type="synonym">NG22</name>
    <name evidence="20" type="synonym">TPPT1</name>
    <name type="ORF">UNQ441/PRO874</name>
</gene>
<protein>
    <recommendedName>
        <fullName evidence="19">Choline transporter-like protein 4</fullName>
    </recommendedName>
    <alternativeName>
        <fullName evidence="24">Solute carrier family 44 member 4</fullName>
    </alternativeName>
    <alternativeName>
        <fullName evidence="20">Thiamine pyrophosphate transporter 1</fullName>
        <shortName evidence="20">hTPPT1</shortName>
    </alternativeName>
</protein>
<evidence type="ECO:0000250" key="1">
    <source>
        <dbReference type="UniProtKB" id="Q7T2B0"/>
    </source>
</evidence>
<evidence type="ECO:0000255" key="2"/>
<evidence type="ECO:0000269" key="3">
    <source>
    </source>
</evidence>
<evidence type="ECO:0000269" key="4">
    <source>
    </source>
</evidence>
<evidence type="ECO:0000269" key="5">
    <source>
    </source>
</evidence>
<evidence type="ECO:0000269" key="6">
    <source>
    </source>
</evidence>
<evidence type="ECO:0000269" key="7">
    <source>
    </source>
</evidence>
<evidence type="ECO:0000269" key="8">
    <source>
    </source>
</evidence>
<evidence type="ECO:0000269" key="9">
    <source>
    </source>
</evidence>
<evidence type="ECO:0000269" key="10">
    <source>
    </source>
</evidence>
<evidence type="ECO:0000269" key="11">
    <source>
    </source>
</evidence>
<evidence type="ECO:0000269" key="12">
    <source>
    </source>
</evidence>
<evidence type="ECO:0000269" key="13">
    <source>
    </source>
</evidence>
<evidence type="ECO:0000269" key="14">
    <source ref="3"/>
</evidence>
<evidence type="ECO:0000269" key="15">
    <source ref="5"/>
</evidence>
<evidence type="ECO:0000269" key="16">
    <source ref="7"/>
</evidence>
<evidence type="ECO:0000303" key="17">
    <source>
    </source>
</evidence>
<evidence type="ECO:0000303" key="18">
    <source>
    </source>
</evidence>
<evidence type="ECO:0000303" key="19">
    <source>
    </source>
</evidence>
<evidence type="ECO:0000303" key="20">
    <source>
    </source>
</evidence>
<evidence type="ECO:0000305" key="21"/>
<evidence type="ECO:0000305" key="22">
    <source>
    </source>
</evidence>
<evidence type="ECO:0000305" key="23">
    <source>
    </source>
</evidence>
<evidence type="ECO:0000312" key="24">
    <source>
        <dbReference type="HGNC" id="HGNC:13941"/>
    </source>
</evidence>
<sequence length="710" mass="79254">MGGKQRDEDDEAYGKPVKYDPSFRGPIKNRSCTDVICCVLFLLFILGYIVVGIVAWLYGDPRQVLYPRNSTGAYCGMGENKDKPYLLYFNIFSCILSSNIISVAENGLQCPTPQVCVSSCPEDPWTVGKNEFSQTVGEVFYTKNRNFCLPGVPWNMTVITSLQQELCPSFLLPSAPALGRCFPWTNVTPPALPGITNDTTIQQGISGLIDSLNARDISVKIFEDFAQSWYWILVALGVALVLSLLFILLLRLVAGPLVLVLILGVLGVLAYGIYYCWEEYRVLRDKGASISQLGFTTNLSAYQSVQETWLAALIVLAVLEAILLLMLIFLRQRIRIAIALLKEASKAVGQMMSTMFYPLVTFVLLLICIAYWAMTALYLATSGQPQYVLWASNISSPGCEKVPINTSCNPTAHLVNSSCPGLMCVFQGYSSKGLIQRSVFNLQIYGVLGLFWTLNWVLALGQCVLAGAFASFYWAFHKPQDIPTFPLISAFIRTLRYHTGSLAFGALILTLVQIARVILEYIDHKLRGVQNPVARCIMCCFKCCLWCLEKFIKFLNRNAYIMIAIYGKNFCVSAKNAFMLLMRNIVRVVVLDKVTDLLLFFGKLLVVGGVGVLSFFFFSGRIPGLGKDFKSPHLNYYWLPIMTSILGAYVIASGFFSVFGMCVDTLFLCFLEDLERNNGSLDRPYYMSKSLLKILGKKNEAPPDNKKRKK</sequence>
<feature type="chain" id="PRO_0000191723" description="Choline transporter-like protein 4">
    <location>
        <begin position="1"/>
        <end position="710"/>
    </location>
</feature>
<feature type="topological domain" description="Cytoplasmic" evidence="2">
    <location>
        <begin position="1"/>
        <end position="34"/>
    </location>
</feature>
<feature type="transmembrane region" description="Helical" evidence="2">
    <location>
        <begin position="35"/>
        <end position="55"/>
    </location>
</feature>
<feature type="topological domain" description="Extracellular" evidence="2">
    <location>
        <begin position="56"/>
        <end position="229"/>
    </location>
</feature>
<feature type="transmembrane region" description="Helical" evidence="2">
    <location>
        <begin position="230"/>
        <end position="250"/>
    </location>
</feature>
<feature type="topological domain" description="Cytoplasmic" evidence="2">
    <location>
        <begin position="251"/>
        <end position="252"/>
    </location>
</feature>
<feature type="transmembrane region" description="Helical" evidence="2">
    <location>
        <begin position="253"/>
        <end position="273"/>
    </location>
</feature>
<feature type="topological domain" description="Extracellular" evidence="2">
    <location>
        <begin position="274"/>
        <end position="309"/>
    </location>
</feature>
<feature type="transmembrane region" description="Helical" evidence="2">
    <location>
        <begin position="310"/>
        <end position="330"/>
    </location>
</feature>
<feature type="topological domain" description="Cytoplasmic" evidence="2">
    <location>
        <begin position="331"/>
        <end position="358"/>
    </location>
</feature>
<feature type="transmembrane region" description="Helical" evidence="2">
    <location>
        <begin position="359"/>
        <end position="379"/>
    </location>
</feature>
<feature type="topological domain" description="Extracellular" evidence="2">
    <location>
        <begin position="380"/>
        <end position="455"/>
    </location>
</feature>
<feature type="transmembrane region" description="Helical" evidence="2">
    <location>
        <begin position="456"/>
        <end position="476"/>
    </location>
</feature>
<feature type="topological domain" description="Cytoplasmic" evidence="2">
    <location>
        <begin position="477"/>
        <end position="501"/>
    </location>
</feature>
<feature type="transmembrane region" description="Helical" evidence="2">
    <location>
        <begin position="502"/>
        <end position="522"/>
    </location>
</feature>
<feature type="topological domain" description="Extracellular" evidence="2">
    <location>
        <begin position="523"/>
        <end position="560"/>
    </location>
</feature>
<feature type="transmembrane region" description="Helical" evidence="2">
    <location>
        <begin position="561"/>
        <end position="581"/>
    </location>
</feature>
<feature type="topological domain" description="Cytoplasmic" evidence="2">
    <location>
        <begin position="582"/>
        <end position="597"/>
    </location>
</feature>
<feature type="transmembrane region" description="Helical" evidence="2">
    <location>
        <begin position="598"/>
        <end position="618"/>
    </location>
</feature>
<feature type="topological domain" description="Extracellular" evidence="2">
    <location>
        <begin position="619"/>
        <end position="638"/>
    </location>
</feature>
<feature type="transmembrane region" description="Helical" evidence="2">
    <location>
        <begin position="639"/>
        <end position="659"/>
    </location>
</feature>
<feature type="topological domain" description="Cytoplasmic" evidence="2">
    <location>
        <begin position="660"/>
        <end position="710"/>
    </location>
</feature>
<feature type="site" description="Breakpoint for translocation with NEU1">
    <location>
        <position position="308"/>
    </location>
</feature>
<feature type="glycosylation site" description="N-linked (GlcNAc...) asparagine" evidence="12">
    <location>
        <position position="69"/>
    </location>
</feature>
<feature type="glycosylation site" description="N-linked (GlcNAc...) asparagine" evidence="12">
    <location>
        <position position="155"/>
    </location>
</feature>
<feature type="glycosylation site" description="N-linked (GlcNAc...) asparagine" evidence="12">
    <location>
        <position position="197"/>
    </location>
</feature>
<feature type="glycosylation site" description="N-linked (GlcNAc...) asparagine" evidence="2">
    <location>
        <position position="298"/>
    </location>
</feature>
<feature type="glycosylation site" description="N-linked (GlcNAc...) asparagine" evidence="12">
    <location>
        <position position="393"/>
    </location>
</feature>
<feature type="glycosylation site" description="N-linked (GlcNAc...) asparagine" evidence="2">
    <location>
        <position position="405"/>
    </location>
</feature>
<feature type="glycosylation site" description="N-linked (GlcNAc...) asparagine" evidence="12">
    <location>
        <position position="416"/>
    </location>
</feature>
<feature type="splice variant" id="VSP_030998" description="In isoform 2." evidence="17">
    <location>
        <begin position="1"/>
        <end position="422"/>
    </location>
</feature>
<feature type="splice variant" id="VSP_046236" description="In isoform 3." evidence="18">
    <location>
        <begin position="1"/>
        <end position="76"/>
    </location>
</feature>
<feature type="splice variant" id="VSP_046821" description="In isoform 4." evidence="18">
    <location>
        <begin position="115"/>
        <end position="156"/>
    </location>
</feature>
<feature type="sequence variant" id="VAR_023406" description="No effect on thiamine pyrophosphate transporter activity; dbSNP:rs2075798." evidence="11">
    <original>R</original>
    <variation>L</variation>
    <location>
        <position position="6"/>
    </location>
</feature>
<feature type="sequence variant" id="VAR_047020" description="No effect on thiamine pyrophosphate transporter activity; dbSNP:rs12661281." evidence="11">
    <original>D</original>
    <variation>V</variation>
    <location>
        <position position="123"/>
    </location>
</feature>
<feature type="sequence variant" id="VAR_047021" description="In dbSNP:rs17856465." evidence="7">
    <original>G</original>
    <variation>E</variation>
    <location>
        <position position="128"/>
    </location>
</feature>
<feature type="sequence variant" id="VAR_078848" description="In DFNA72; decreases choline transmembrane transporter activity; dbSNP:rs1135402753." evidence="13">
    <original>M</original>
    <variation>V</variation>
    <location>
        <position position="156"/>
    </location>
</feature>
<feature type="sequence variant" id="VAR_023407" description="In dbSNP:rs2242665." evidence="3 4 5 6 7 11 14 15 16">
    <original>V</original>
    <variation>I</variation>
    <location>
        <position position="187"/>
    </location>
</feature>
<feature type="sequence variant" id="VAR_023408" description="In dbSNP:rs644827." evidence="4 5 6 7 11 14 15 16">
    <original>M</original>
    <variation>V</variation>
    <location>
        <position position="326"/>
    </location>
</feature>
<feature type="sequence variant" id="VAR_036210" description="In a colorectal cancer sample; somatic mutation." evidence="8">
    <original>A</original>
    <variation>T</variation>
    <location>
        <position position="347"/>
    </location>
</feature>
<feature type="sequence variant" id="VAR_078849" description="No effect on thiamine pyrophosphate transporter activity; dbSNP:rs116706632." evidence="11">
    <original>P</original>
    <variation>S</variation>
    <location>
        <position position="397"/>
    </location>
</feature>
<feature type="sequence variant" id="VAR_036211" description="In a colorectal cancer sample; somatic mutation; dbSNP:rs563426936." evidence="8">
    <original>T</original>
    <variation>M</variation>
    <location>
        <position position="411"/>
    </location>
</feature>
<feature type="sequence variant" id="VAR_023409" description="In dbSNP:rs6915800.">
    <original>R</original>
    <variation>C</variation>
    <location>
        <position position="493"/>
    </location>
</feature>
<feature type="mutagenesis site" description="No effect on glycosylation." evidence="12">
    <original>N</original>
    <variation>D</variation>
    <location>
        <position position="29"/>
    </location>
</feature>
<feature type="mutagenesis site" description="Decreases glycosylation levels. Decreases thiamine pyrophosphate uptake." evidence="12">
    <original>N</original>
    <variation>D</variation>
    <location>
        <position position="69"/>
    </location>
</feature>
<feature type="mutagenesis site" description="Decreases glycosylation levels. Decreases thiamine pyrophosphate uptake." evidence="12">
    <original>N</original>
    <variation>D</variation>
    <location>
        <position position="155"/>
    </location>
</feature>
<feature type="mutagenesis site" description="Decreases glycosylation levels. No effect on thiamine pyrophosphate uptake." evidence="12">
    <original>N</original>
    <variation>D</variation>
    <location>
        <position position="197"/>
    </location>
</feature>
<feature type="mutagenesis site" description="No effect on glycosylation." evidence="12">
    <original>N</original>
    <variation>D</variation>
    <location>
        <position position="298"/>
    </location>
</feature>
<feature type="mutagenesis site" description="Decreases glycosylation levels. Decreases thiamine pyrophosphate uptake." evidence="12">
    <original>N</original>
    <variation>D</variation>
    <location>
        <position position="393"/>
    </location>
</feature>
<feature type="mutagenesis site" description="No effect on glycosylation." evidence="12">
    <original>N</original>
    <variation>D</variation>
    <location>
        <position position="409"/>
    </location>
</feature>
<feature type="mutagenesis site" description="Decreases glycosylation levels. No effect on thiamine pyrophosphate uptake." evidence="12">
    <original>N</original>
    <variation>D</variation>
    <location>
        <position position="416"/>
    </location>
</feature>
<feature type="sequence conflict" description="In Ref. 10; CAH56275." evidence="21" ref="10">
    <location>
        <begin position="117"/>
        <end position="118"/>
    </location>
</feature>
<feature type="sequence conflict" description="In Ref. 1; BAB55083." evidence="21" ref="1">
    <original>NR</original>
    <variation>SS</variation>
    <location>
        <begin position="144"/>
        <end position="145"/>
    </location>
</feature>
<feature type="sequence conflict" description="In Ref. 4; AAD21813 and 5; BAB63296." evidence="21" ref="4 5">
    <original>LATSGQPQ</original>
    <variation>PLPTQPATLG</variation>
    <location>
        <begin position="379"/>
        <end position="386"/>
    </location>
</feature>
<feature type="sequence conflict" description="In Ref. 8; AAH14659." evidence="21" ref="8">
    <location>
        <position position="636"/>
    </location>
</feature>
<name>CTL4_HUMAN</name>
<accession>Q53GD3</accession>
<accession>A2BED3</accession>
<accession>B0UXX8</accession>
<accession>B0UZY8</accession>
<accession>B4DU94</accession>
<accession>B4DWM2</accession>
<accession>E9PEK7</accession>
<accession>Q5JP84</accession>
<accession>Q5JQ93</accession>
<accession>Q658S8</accession>
<accession>Q6UX89</accession>
<accession>Q8TEW4</accession>
<accession>Q96C58</accession>
<accession>Q96K59</accession>
<accession>Q9Y332</accession>
<proteinExistence type="evidence at protein level"/>
<reference key="1">
    <citation type="journal article" date="2004" name="Nat. Genet.">
        <title>Complete sequencing and characterization of 21,243 full-length human cDNAs.</title>
        <authorList>
            <person name="Ota T."/>
            <person name="Suzuki Y."/>
            <person name="Nishikawa T."/>
            <person name="Otsuki T."/>
            <person name="Sugiyama T."/>
            <person name="Irie R."/>
            <person name="Wakamatsu A."/>
            <person name="Hayashi K."/>
            <person name="Sato H."/>
            <person name="Nagai K."/>
            <person name="Kimura K."/>
            <person name="Makita H."/>
            <person name="Sekine M."/>
            <person name="Obayashi M."/>
            <person name="Nishi T."/>
            <person name="Shibahara T."/>
            <person name="Tanaka T."/>
            <person name="Ishii S."/>
            <person name="Yamamoto J."/>
            <person name="Saito K."/>
            <person name="Kawai Y."/>
            <person name="Isono Y."/>
            <person name="Nakamura Y."/>
            <person name="Nagahari K."/>
            <person name="Murakami K."/>
            <person name="Yasuda T."/>
            <person name="Iwayanagi T."/>
            <person name="Wagatsuma M."/>
            <person name="Shiratori A."/>
            <person name="Sudo H."/>
            <person name="Hosoiri T."/>
            <person name="Kaku Y."/>
            <person name="Kodaira H."/>
            <person name="Kondo H."/>
            <person name="Sugawara M."/>
            <person name="Takahashi M."/>
            <person name="Kanda K."/>
            <person name="Yokoi T."/>
            <person name="Furuya T."/>
            <person name="Kikkawa E."/>
            <person name="Omura Y."/>
            <person name="Abe K."/>
            <person name="Kamihara K."/>
            <person name="Katsuta N."/>
            <person name="Sato K."/>
            <person name="Tanikawa M."/>
            <person name="Yamazaki M."/>
            <person name="Ninomiya K."/>
            <person name="Ishibashi T."/>
            <person name="Yamashita H."/>
            <person name="Murakawa K."/>
            <person name="Fujimori K."/>
            <person name="Tanai H."/>
            <person name="Kimata M."/>
            <person name="Watanabe M."/>
            <person name="Hiraoka S."/>
            <person name="Chiba Y."/>
            <person name="Ishida S."/>
            <person name="Ono Y."/>
            <person name="Takiguchi S."/>
            <person name="Watanabe S."/>
            <person name="Yosida M."/>
            <person name="Hotuta T."/>
            <person name="Kusano J."/>
            <person name="Kanehori K."/>
            <person name="Takahashi-Fujii A."/>
            <person name="Hara H."/>
            <person name="Tanase T.-O."/>
            <person name="Nomura Y."/>
            <person name="Togiya S."/>
            <person name="Komai F."/>
            <person name="Hara R."/>
            <person name="Takeuchi K."/>
            <person name="Arita M."/>
            <person name="Imose N."/>
            <person name="Musashino K."/>
            <person name="Yuuki H."/>
            <person name="Oshima A."/>
            <person name="Sasaki N."/>
            <person name="Aotsuka S."/>
            <person name="Yoshikawa Y."/>
            <person name="Matsunawa H."/>
            <person name="Ichihara T."/>
            <person name="Shiohata N."/>
            <person name="Sano S."/>
            <person name="Moriya S."/>
            <person name="Momiyama H."/>
            <person name="Satoh N."/>
            <person name="Takami S."/>
            <person name="Terashima Y."/>
            <person name="Suzuki O."/>
            <person name="Nakagawa S."/>
            <person name="Senoh A."/>
            <person name="Mizoguchi H."/>
            <person name="Goto Y."/>
            <person name="Shimizu F."/>
            <person name="Wakebe H."/>
            <person name="Hishigaki H."/>
            <person name="Watanabe T."/>
            <person name="Sugiyama A."/>
            <person name="Takemoto M."/>
            <person name="Kawakami B."/>
            <person name="Yamazaki M."/>
            <person name="Watanabe K."/>
            <person name="Kumagai A."/>
            <person name="Itakura S."/>
            <person name="Fukuzumi Y."/>
            <person name="Fujimori Y."/>
            <person name="Komiyama M."/>
            <person name="Tashiro H."/>
            <person name="Tanigami A."/>
            <person name="Fujiwara T."/>
            <person name="Ono T."/>
            <person name="Yamada K."/>
            <person name="Fujii Y."/>
            <person name="Ozaki K."/>
            <person name="Hirao M."/>
            <person name="Ohmori Y."/>
            <person name="Kawabata A."/>
            <person name="Hikiji T."/>
            <person name="Kobatake N."/>
            <person name="Inagaki H."/>
            <person name="Ikema Y."/>
            <person name="Okamoto S."/>
            <person name="Okitani R."/>
            <person name="Kawakami T."/>
            <person name="Noguchi S."/>
            <person name="Itoh T."/>
            <person name="Shigeta K."/>
            <person name="Senba T."/>
            <person name="Matsumura K."/>
            <person name="Nakajima Y."/>
            <person name="Mizuno T."/>
            <person name="Morinaga M."/>
            <person name="Sasaki M."/>
            <person name="Togashi T."/>
            <person name="Oyama M."/>
            <person name="Hata H."/>
            <person name="Watanabe M."/>
            <person name="Komatsu T."/>
            <person name="Mizushima-Sugano J."/>
            <person name="Satoh T."/>
            <person name="Shirai Y."/>
            <person name="Takahashi Y."/>
            <person name="Nakagawa K."/>
            <person name="Okumura K."/>
            <person name="Nagase T."/>
            <person name="Nomura N."/>
            <person name="Kikuchi H."/>
            <person name="Masuho Y."/>
            <person name="Yamashita R."/>
            <person name="Nakai K."/>
            <person name="Yada T."/>
            <person name="Nakamura Y."/>
            <person name="Ohara O."/>
            <person name="Isogai T."/>
            <person name="Sugano S."/>
        </authorList>
    </citation>
    <scope>NUCLEOTIDE SEQUENCE [LARGE SCALE MRNA] (ISOFORMS 1; 3 AND 4)</scope>
    <scope>VARIANTS ILE-187 AND VAL-326</scope>
    <source>
        <tissue>Mammary gland</tissue>
        <tissue>Prostate</tissue>
    </source>
</reference>
<reference key="2">
    <citation type="journal article" date="2003" name="Genome Res.">
        <title>The secreted protein discovery initiative (SPDI), a large-scale effort to identify novel human secreted and transmembrane proteins: a bioinformatics assessment.</title>
        <authorList>
            <person name="Clark H.F."/>
            <person name="Gurney A.L."/>
            <person name="Abaya E."/>
            <person name="Baker K."/>
            <person name="Baldwin D.T."/>
            <person name="Brush J."/>
            <person name="Chen J."/>
            <person name="Chow B."/>
            <person name="Chui C."/>
            <person name="Crowley C."/>
            <person name="Currell B."/>
            <person name="Deuel B."/>
            <person name="Dowd P."/>
            <person name="Eaton D."/>
            <person name="Foster J.S."/>
            <person name="Grimaldi C."/>
            <person name="Gu Q."/>
            <person name="Hass P.E."/>
            <person name="Heldens S."/>
            <person name="Huang A."/>
            <person name="Kim H.S."/>
            <person name="Klimowski L."/>
            <person name="Jin Y."/>
            <person name="Johnson S."/>
            <person name="Lee J."/>
            <person name="Lewis L."/>
            <person name="Liao D."/>
            <person name="Mark M.R."/>
            <person name="Robbie E."/>
            <person name="Sanchez C."/>
            <person name="Schoenfeld J."/>
            <person name="Seshagiri S."/>
            <person name="Simmons L."/>
            <person name="Singh J."/>
            <person name="Smith V."/>
            <person name="Stinson J."/>
            <person name="Vagts A."/>
            <person name="Vandlen R.L."/>
            <person name="Watanabe C."/>
            <person name="Wieand D."/>
            <person name="Woods K."/>
            <person name="Xie M.-H."/>
            <person name="Yansura D.G."/>
            <person name="Yi S."/>
            <person name="Yu G."/>
            <person name="Yuan J."/>
            <person name="Zhang M."/>
            <person name="Zhang Z."/>
            <person name="Goddard A.D."/>
            <person name="Wood W.I."/>
            <person name="Godowski P.J."/>
            <person name="Gray A.M."/>
        </authorList>
    </citation>
    <scope>NUCLEOTIDE SEQUENCE [LARGE SCALE MRNA] (ISOFORM 2)</scope>
</reference>
<reference key="3">
    <citation type="submission" date="2005-04" db="EMBL/GenBank/DDBJ databases">
        <authorList>
            <person name="Suzuki Y."/>
            <person name="Sugano S."/>
            <person name="Totoki Y."/>
            <person name="Toyoda A."/>
            <person name="Takeda T."/>
            <person name="Sakaki Y."/>
            <person name="Tanaka A."/>
            <person name="Yokoyama S."/>
        </authorList>
    </citation>
    <scope>NUCLEOTIDE SEQUENCE [LARGE SCALE MRNA] (ISOFORM 1)</scope>
    <scope>VARIANTS ILE-187 AND VAL-326</scope>
    <source>
        <tissue>Small intestine</tissue>
    </source>
</reference>
<reference key="4">
    <citation type="journal article" date="2003" name="Genome Res.">
        <title>Analysis of the gene-dense major histocompatibility complex class III region and its comparison to mouse.</title>
        <authorList>
            <person name="Xie T."/>
            <person name="Rowen L."/>
            <person name="Aguado B."/>
            <person name="Ahearn M.E."/>
            <person name="Madan A."/>
            <person name="Qin S."/>
            <person name="Campbell R.D."/>
            <person name="Hood L."/>
        </authorList>
    </citation>
    <scope>NUCLEOTIDE SEQUENCE [LARGE SCALE GENOMIC DNA]</scope>
    <scope>VARIANTS ILE-187 AND VAL-326</scope>
</reference>
<reference key="5">
    <citation type="submission" date="1999-09" db="EMBL/GenBank/DDBJ databases">
        <title>Homo sapiens 2,229,817bp genomic DNA of 6p21.3 HLA class I region.</title>
        <authorList>
            <person name="Shiina S."/>
            <person name="Tamiya G."/>
            <person name="Oka A."/>
            <person name="Inoko H."/>
        </authorList>
    </citation>
    <scope>NUCLEOTIDE SEQUENCE [LARGE SCALE GENOMIC DNA]</scope>
    <scope>VARIANTS ILE-187 AND VAL-326</scope>
</reference>
<reference key="6">
    <citation type="journal article" date="2003" name="Nature">
        <title>The DNA sequence and analysis of human chromosome 6.</title>
        <authorList>
            <person name="Mungall A.J."/>
            <person name="Palmer S.A."/>
            <person name="Sims S.K."/>
            <person name="Edwards C.A."/>
            <person name="Ashurst J.L."/>
            <person name="Wilming L."/>
            <person name="Jones M.C."/>
            <person name="Horton R."/>
            <person name="Hunt S.E."/>
            <person name="Scott C.E."/>
            <person name="Gilbert J.G.R."/>
            <person name="Clamp M.E."/>
            <person name="Bethel G."/>
            <person name="Milne S."/>
            <person name="Ainscough R."/>
            <person name="Almeida J.P."/>
            <person name="Ambrose K.D."/>
            <person name="Andrews T.D."/>
            <person name="Ashwell R.I.S."/>
            <person name="Babbage A.K."/>
            <person name="Bagguley C.L."/>
            <person name="Bailey J."/>
            <person name="Banerjee R."/>
            <person name="Barker D.J."/>
            <person name="Barlow K.F."/>
            <person name="Bates K."/>
            <person name="Beare D.M."/>
            <person name="Beasley H."/>
            <person name="Beasley O."/>
            <person name="Bird C.P."/>
            <person name="Blakey S.E."/>
            <person name="Bray-Allen S."/>
            <person name="Brook J."/>
            <person name="Brown A.J."/>
            <person name="Brown J.Y."/>
            <person name="Burford D.C."/>
            <person name="Burrill W."/>
            <person name="Burton J."/>
            <person name="Carder C."/>
            <person name="Carter N.P."/>
            <person name="Chapman J.C."/>
            <person name="Clark S.Y."/>
            <person name="Clark G."/>
            <person name="Clee C.M."/>
            <person name="Clegg S."/>
            <person name="Cobley V."/>
            <person name="Collier R.E."/>
            <person name="Collins J.E."/>
            <person name="Colman L.K."/>
            <person name="Corby N.R."/>
            <person name="Coville G.J."/>
            <person name="Culley K.M."/>
            <person name="Dhami P."/>
            <person name="Davies J."/>
            <person name="Dunn M."/>
            <person name="Earthrowl M.E."/>
            <person name="Ellington A.E."/>
            <person name="Evans K.A."/>
            <person name="Faulkner L."/>
            <person name="Francis M.D."/>
            <person name="Frankish A."/>
            <person name="Frankland J."/>
            <person name="French L."/>
            <person name="Garner P."/>
            <person name="Garnett J."/>
            <person name="Ghori M.J."/>
            <person name="Gilby L.M."/>
            <person name="Gillson C.J."/>
            <person name="Glithero R.J."/>
            <person name="Grafham D.V."/>
            <person name="Grant M."/>
            <person name="Gribble S."/>
            <person name="Griffiths C."/>
            <person name="Griffiths M.N.D."/>
            <person name="Hall R."/>
            <person name="Halls K.S."/>
            <person name="Hammond S."/>
            <person name="Harley J.L."/>
            <person name="Hart E.A."/>
            <person name="Heath P.D."/>
            <person name="Heathcott R."/>
            <person name="Holmes S.J."/>
            <person name="Howden P.J."/>
            <person name="Howe K.L."/>
            <person name="Howell G.R."/>
            <person name="Huckle E."/>
            <person name="Humphray S.J."/>
            <person name="Humphries M.D."/>
            <person name="Hunt A.R."/>
            <person name="Johnson C.M."/>
            <person name="Joy A.A."/>
            <person name="Kay M."/>
            <person name="Keenan S.J."/>
            <person name="Kimberley A.M."/>
            <person name="King A."/>
            <person name="Laird G.K."/>
            <person name="Langford C."/>
            <person name="Lawlor S."/>
            <person name="Leongamornlert D.A."/>
            <person name="Leversha M."/>
            <person name="Lloyd C.R."/>
            <person name="Lloyd D.M."/>
            <person name="Loveland J.E."/>
            <person name="Lovell J."/>
            <person name="Martin S."/>
            <person name="Mashreghi-Mohammadi M."/>
            <person name="Maslen G.L."/>
            <person name="Matthews L."/>
            <person name="McCann O.T."/>
            <person name="McLaren S.J."/>
            <person name="McLay K."/>
            <person name="McMurray A."/>
            <person name="Moore M.J.F."/>
            <person name="Mullikin J.C."/>
            <person name="Niblett D."/>
            <person name="Nickerson T."/>
            <person name="Novik K.L."/>
            <person name="Oliver K."/>
            <person name="Overton-Larty E.K."/>
            <person name="Parker A."/>
            <person name="Patel R."/>
            <person name="Pearce A.V."/>
            <person name="Peck A.I."/>
            <person name="Phillimore B.J.C.T."/>
            <person name="Phillips S."/>
            <person name="Plumb R.W."/>
            <person name="Porter K.M."/>
            <person name="Ramsey Y."/>
            <person name="Ranby S.A."/>
            <person name="Rice C.M."/>
            <person name="Ross M.T."/>
            <person name="Searle S.M."/>
            <person name="Sehra H.K."/>
            <person name="Sheridan E."/>
            <person name="Skuce C.D."/>
            <person name="Smith S."/>
            <person name="Smith M."/>
            <person name="Spraggon L."/>
            <person name="Squares S.L."/>
            <person name="Steward C.A."/>
            <person name="Sycamore N."/>
            <person name="Tamlyn-Hall G."/>
            <person name="Tester J."/>
            <person name="Theaker A.J."/>
            <person name="Thomas D.W."/>
            <person name="Thorpe A."/>
            <person name="Tracey A."/>
            <person name="Tromans A."/>
            <person name="Tubby B."/>
            <person name="Wall M."/>
            <person name="Wallis J.M."/>
            <person name="West A.P."/>
            <person name="White S.S."/>
            <person name="Whitehead S.L."/>
            <person name="Whittaker H."/>
            <person name="Wild A."/>
            <person name="Willey D.J."/>
            <person name="Wilmer T.E."/>
            <person name="Wood J.M."/>
            <person name="Wray P.W."/>
            <person name="Wyatt J.C."/>
            <person name="Young L."/>
            <person name="Younger R.M."/>
            <person name="Bentley D.R."/>
            <person name="Coulson A."/>
            <person name="Durbin R.M."/>
            <person name="Hubbard T."/>
            <person name="Sulston J.E."/>
            <person name="Dunham I."/>
            <person name="Rogers J."/>
            <person name="Beck S."/>
        </authorList>
    </citation>
    <scope>NUCLEOTIDE SEQUENCE [LARGE SCALE GENOMIC DNA]</scope>
    <scope>VARIANTS ILE-187 AND VAL-326</scope>
</reference>
<reference key="7">
    <citation type="submission" date="2005-07" db="EMBL/GenBank/DDBJ databases">
        <authorList>
            <person name="Mural R.J."/>
            <person name="Istrail S."/>
            <person name="Sutton G.G."/>
            <person name="Florea L."/>
            <person name="Halpern A.L."/>
            <person name="Mobarry C.M."/>
            <person name="Lippert R."/>
            <person name="Walenz B."/>
            <person name="Shatkay H."/>
            <person name="Dew I."/>
            <person name="Miller J.R."/>
            <person name="Flanigan M.J."/>
            <person name="Edwards N.J."/>
            <person name="Bolanos R."/>
            <person name="Fasulo D."/>
            <person name="Halldorsson B.V."/>
            <person name="Hannenhalli S."/>
            <person name="Turner R."/>
            <person name="Yooseph S."/>
            <person name="Lu F."/>
            <person name="Nusskern D.R."/>
            <person name="Shue B.C."/>
            <person name="Zheng X.H."/>
            <person name="Zhong F."/>
            <person name="Delcher A.L."/>
            <person name="Huson D.H."/>
            <person name="Kravitz S.A."/>
            <person name="Mouchard L."/>
            <person name="Reinert K."/>
            <person name="Remington K.A."/>
            <person name="Clark A.G."/>
            <person name="Waterman M.S."/>
            <person name="Eichler E.E."/>
            <person name="Adams M.D."/>
            <person name="Hunkapiller M.W."/>
            <person name="Myers E.W."/>
            <person name="Venter J.C."/>
        </authorList>
    </citation>
    <scope>NUCLEOTIDE SEQUENCE [LARGE SCALE GENOMIC DNA]</scope>
    <scope>VARIANTS ILE-187 AND VAL-326</scope>
</reference>
<reference key="8">
    <citation type="journal article" date="2004" name="Genome Res.">
        <title>The status, quality, and expansion of the NIH full-length cDNA project: the Mammalian Gene Collection (MGC).</title>
        <authorList>
            <consortium name="The MGC Project Team"/>
        </authorList>
    </citation>
    <scope>NUCLEOTIDE SEQUENCE [LARGE SCALE MRNA] (ISOFORM 1)</scope>
    <scope>VARIANTS GLU-128; ILE-187 AND VAL-326</scope>
    <source>
        <tissue>Colon</tissue>
    </source>
</reference>
<reference key="9">
    <citation type="journal article" date="2002" name="FEBS Lett.">
        <title>Identification of a CTL4/Neu1 fusion transcript in a sialidosis patient.</title>
        <authorList>
            <person name="Uhl J."/>
            <person name="Penzel R."/>
            <person name="Sergi C."/>
            <person name="Kopitz J."/>
            <person name="Otto H.F."/>
            <person name="Cantz M."/>
        </authorList>
    </citation>
    <scope>NUCLEOTIDE SEQUENCE [MRNA] OF 1-308 (ISOFORM 1)</scope>
    <scope>CHROMOSOMAL REARRANGEMENT WITH NEU1</scope>
    <scope>VARIANT ILE-187</scope>
</reference>
<reference key="10">
    <citation type="journal article" date="2007" name="BMC Genomics">
        <title>The full-ORF clone resource of the German cDNA consortium.</title>
        <authorList>
            <person name="Bechtel S."/>
            <person name="Rosenfelder H."/>
            <person name="Duda A."/>
            <person name="Schmidt C.P."/>
            <person name="Ernst U."/>
            <person name="Wellenreuther R."/>
            <person name="Mehrle A."/>
            <person name="Schuster C."/>
            <person name="Bahr A."/>
            <person name="Bloecker H."/>
            <person name="Heubner D."/>
            <person name="Hoerlein A."/>
            <person name="Michel G."/>
            <person name="Wedler H."/>
            <person name="Koehrer K."/>
            <person name="Ottenwaelder B."/>
            <person name="Poustka A."/>
            <person name="Wiemann S."/>
            <person name="Schupp I."/>
        </authorList>
    </citation>
    <scope>NUCLEOTIDE SEQUENCE [LARGE SCALE MRNA] OF 81-710 (ISOFORMS 1/3)</scope>
    <source>
        <tissue>Stomach</tissue>
    </source>
</reference>
<reference key="11">
    <citation type="journal article" date="2000" name="Proc. Natl. Acad. Sci. U.S.A.">
        <title>An electric lobe suppressor for a yeast choline transport mutation belongs to a new family of transporter-like proteins.</title>
        <authorList>
            <person name="O'Regan S."/>
            <person name="Traiffort E."/>
            <person name="Ruat M."/>
            <person name="Cha N."/>
            <person name="Compaore D."/>
            <person name="Meunier F.-M."/>
        </authorList>
    </citation>
    <scope>IDENTIFICATION</scope>
    <scope>NOMENCLATURE</scope>
</reference>
<reference key="12">
    <citation type="journal article" date="2013" name="J. Neurochem.">
        <title>Choline transporter-like protein 4 (CTL4) links to non-neuronal acetylcholine synthesis.</title>
        <authorList>
            <person name="Song P."/>
            <person name="Rekow S.S."/>
            <person name="Singleton C.A."/>
            <person name="Sekhon H.S."/>
            <person name="Dissen G.A."/>
            <person name="Zhou M."/>
            <person name="Campling B."/>
            <person name="Lindstrom J."/>
            <person name="Spindel E.R."/>
        </authorList>
    </citation>
    <scope>FUNCTION</scope>
    <scope>TRANSPORTER ACTIVITY</scope>
</reference>
<reference key="13">
    <citation type="journal article" date="2014" name="J. Biol. Chem.">
        <title>Molecular identification and functional characterization of the human colonic thiamine pyrophosphate transporter.</title>
        <authorList>
            <person name="Nabokina S.M."/>
            <person name="Inoue K."/>
            <person name="Subramanian V.S."/>
            <person name="Valle J.E."/>
            <person name="Yuasa H."/>
            <person name="Said H.M."/>
        </authorList>
    </citation>
    <scope>FUNCTION</scope>
    <scope>FUNCTION (ISOFORM 3)</scope>
    <scope>TISSUE SPECIFICITY</scope>
    <scope>SUBCELLULAR LOCATION</scope>
    <scope>BIOPHYSICOCHEMICAL PROPERTIES</scope>
    <scope>ALTERNATIVE SPLICING</scope>
    <scope>TRANSPORTER ACTIVITY</scope>
</reference>
<reference key="14">
    <citation type="journal article" date="2016" name="Biochim. Biophys. Acta">
        <title>The human colonic thiamine pyrophosphate transporter (hTPPT) is a glycoprotein and N-linked glycosylation is important for its function.</title>
        <authorList>
            <person name="Nabokina S.M."/>
            <person name="Subramanian V.S."/>
            <person name="Said H.M."/>
        </authorList>
    </citation>
    <scope>FUNCTION</scope>
    <scope>GLYCOSYLATION AT ASN-69; ASN-155; ASN-197 AND ASN-416</scope>
    <scope>MUTAGENESIS OF ASN-29; ASN-69; ASN-155; ASN-197; ASN-298; ASN-393; ASN-409 AND ASN-416</scope>
    <scope>SUBCELLULAR LOCATION</scope>
</reference>
<reference key="15">
    <citation type="journal article" date="2006" name="Science">
        <title>The consensus coding sequences of human breast and colorectal cancers.</title>
        <authorList>
            <person name="Sjoeblom T."/>
            <person name="Jones S."/>
            <person name="Wood L.D."/>
            <person name="Parsons D.W."/>
            <person name="Lin J."/>
            <person name="Barber T.D."/>
            <person name="Mandelker D."/>
            <person name="Leary R.J."/>
            <person name="Ptak J."/>
            <person name="Silliman N."/>
            <person name="Szabo S."/>
            <person name="Buckhaults P."/>
            <person name="Farrell C."/>
            <person name="Meeh P."/>
            <person name="Markowitz S.D."/>
            <person name="Willis J."/>
            <person name="Dawson D."/>
            <person name="Willson J.K.V."/>
            <person name="Gazdar A.F."/>
            <person name="Hartigan J."/>
            <person name="Wu L."/>
            <person name="Liu C."/>
            <person name="Parmigiani G."/>
            <person name="Park B.H."/>
            <person name="Bachman K.E."/>
            <person name="Papadopoulos N."/>
            <person name="Vogelstein B."/>
            <person name="Kinzler K.W."/>
            <person name="Velculescu V.E."/>
        </authorList>
    </citation>
    <scope>VARIANTS [LARGE SCALE ANALYSIS] THR-347 AND MET-411</scope>
</reference>
<reference key="16">
    <citation type="journal article" date="2016" name="Genes Immun.">
        <title>Identification of critical variants within SLC44A4, an ulcerative colitis susceptibility gene identified in a GWAS in north Indians.</title>
        <authorList>
            <person name="Gupta A."/>
            <person name="Thelma B.K."/>
        </authorList>
    </citation>
    <scope>VARIANTS LEU-6; VAL-123; ILE-187; VAL-326 AND SER-397</scope>
    <scope>CHARACTERIZATION OF VARIANTS LEU-6; VAL-123 AND SER-397</scope>
    <scope>TRANSPORTER ACTIVITY</scope>
    <scope>FUNCTION</scope>
</reference>
<reference key="17">
    <citation type="journal article" date="2017" name="Hum. Mol. Genet.">
        <title>SLC44A4 mutation causes autosomal dominant hereditary postlingual non-syndromic mid-frequency hearing loss.</title>
        <authorList>
            <person name="Ma Z."/>
            <person name="Xia W."/>
            <person name="Liu F."/>
            <person name="Ma J."/>
            <person name="Sun S."/>
            <person name="Zhang J."/>
            <person name="Jiang N."/>
            <person name="Wang X."/>
            <person name="Hu J."/>
            <person name="Ma D."/>
        </authorList>
    </citation>
    <scope>FUNCTION</scope>
    <scope>INVOLVEMENT IN DFNA72</scope>
    <scope>VARIANT DFNA72 VAL-156</scope>
    <scope>CHARACTERIZATION OF VARIANT DFNA72 VAL-156</scope>
    <scope>TRANSPORTER ACTIVITY</scope>
</reference>
<dbReference type="EMBL" id="AK027397">
    <property type="protein sequence ID" value="BAB55083.1"/>
    <property type="molecule type" value="mRNA"/>
</dbReference>
<dbReference type="EMBL" id="AK300550">
    <property type="protein sequence ID" value="BAG62256.1"/>
    <property type="molecule type" value="mRNA"/>
</dbReference>
<dbReference type="EMBL" id="AK301596">
    <property type="protein sequence ID" value="BAG63084.1"/>
    <property type="molecule type" value="mRNA"/>
</dbReference>
<dbReference type="EMBL" id="AY358457">
    <property type="protein sequence ID" value="AAQ88822.1"/>
    <property type="molecule type" value="mRNA"/>
</dbReference>
<dbReference type="EMBL" id="AK222998">
    <property type="protein sequence ID" value="BAD96718.1"/>
    <property type="molecule type" value="mRNA"/>
</dbReference>
<dbReference type="EMBL" id="AF134726">
    <property type="protein sequence ID" value="AAD21813.1"/>
    <property type="molecule type" value="Genomic_DNA"/>
</dbReference>
<dbReference type="EMBL" id="BA000025">
    <property type="protein sequence ID" value="BAB63296.1"/>
    <property type="molecule type" value="Genomic_DNA"/>
</dbReference>
<dbReference type="EMBL" id="AL662834">
    <property type="status" value="NOT_ANNOTATED_CDS"/>
    <property type="molecule type" value="Genomic_DNA"/>
</dbReference>
<dbReference type="EMBL" id="AL671762">
    <property type="status" value="NOT_ANNOTATED_CDS"/>
    <property type="molecule type" value="Genomic_DNA"/>
</dbReference>
<dbReference type="EMBL" id="AL844853">
    <property type="status" value="NOT_ANNOTATED_CDS"/>
    <property type="molecule type" value="Genomic_DNA"/>
</dbReference>
<dbReference type="EMBL" id="BX005460">
    <property type="status" value="NOT_ANNOTATED_CDS"/>
    <property type="molecule type" value="Genomic_DNA"/>
</dbReference>
<dbReference type="EMBL" id="CR388202">
    <property type="status" value="NOT_ANNOTATED_CDS"/>
    <property type="molecule type" value="Genomic_DNA"/>
</dbReference>
<dbReference type="EMBL" id="CR759784">
    <property type="status" value="NOT_ANNOTATED_CDS"/>
    <property type="molecule type" value="Genomic_DNA"/>
</dbReference>
<dbReference type="EMBL" id="CR936237">
    <property type="status" value="NOT_ANNOTATED_CDS"/>
    <property type="molecule type" value="Genomic_DNA"/>
</dbReference>
<dbReference type="EMBL" id="CH471081">
    <property type="protein sequence ID" value="EAX03538.1"/>
    <property type="molecule type" value="Genomic_DNA"/>
</dbReference>
<dbReference type="EMBL" id="BC014659">
    <property type="protein sequence ID" value="AAH14659.1"/>
    <property type="molecule type" value="mRNA"/>
</dbReference>
<dbReference type="EMBL" id="AF466766">
    <property type="protein sequence ID" value="AAL75992.1"/>
    <property type="molecule type" value="mRNA"/>
</dbReference>
<dbReference type="EMBL" id="AL833009">
    <property type="protein sequence ID" value="CAH56275.1"/>
    <property type="molecule type" value="mRNA"/>
</dbReference>
<dbReference type="CCDS" id="CCDS4724.2">
    <molecule id="Q53GD3-1"/>
</dbReference>
<dbReference type="CCDS" id="CCDS54989.1">
    <molecule id="Q53GD3-3"/>
</dbReference>
<dbReference type="CCDS" id="CCDS54990.1">
    <molecule id="Q53GD3-4"/>
</dbReference>
<dbReference type="RefSeq" id="NP_001171515.1">
    <molecule id="Q53GD3-4"/>
    <property type="nucleotide sequence ID" value="NM_001178044.2"/>
</dbReference>
<dbReference type="RefSeq" id="NP_001171516.1">
    <molecule id="Q53GD3-3"/>
    <property type="nucleotide sequence ID" value="NM_001178045.2"/>
</dbReference>
<dbReference type="RefSeq" id="NP_079533.2">
    <molecule id="Q53GD3-1"/>
    <property type="nucleotide sequence ID" value="NM_025257.3"/>
</dbReference>
<dbReference type="SMR" id="Q53GD3"/>
<dbReference type="BioGRID" id="123281">
    <property type="interactions" value="3"/>
</dbReference>
<dbReference type="FunCoup" id="Q53GD3">
    <property type="interactions" value="272"/>
</dbReference>
<dbReference type="IntAct" id="Q53GD3">
    <property type="interactions" value="2"/>
</dbReference>
<dbReference type="STRING" id="9606.ENSP00000229729"/>
<dbReference type="ChEMBL" id="CHEMBL3713014"/>
<dbReference type="DrugBank" id="DB00122">
    <property type="generic name" value="Choline"/>
</dbReference>
<dbReference type="DrugBank" id="DB14006">
    <property type="generic name" value="Choline salicylate"/>
</dbReference>
<dbReference type="TCDB" id="2.A.92.1.7">
    <property type="family name" value="the choline transporter-like (ctl) family"/>
</dbReference>
<dbReference type="GlyConnect" id="1112">
    <property type="glycosylation" value="3 N-Linked glycans (1 site)"/>
</dbReference>
<dbReference type="GlyCosmos" id="Q53GD3">
    <property type="glycosylation" value="7 sites, 2 glycans"/>
</dbReference>
<dbReference type="GlyGen" id="Q53GD3">
    <property type="glycosylation" value="7 sites, 9 N-linked glycans (1 site)"/>
</dbReference>
<dbReference type="iPTMnet" id="Q53GD3"/>
<dbReference type="PhosphoSitePlus" id="Q53GD3"/>
<dbReference type="SwissPalm" id="Q53GD3"/>
<dbReference type="BioMuta" id="SLC44A4"/>
<dbReference type="DMDM" id="311033368"/>
<dbReference type="jPOST" id="Q53GD3"/>
<dbReference type="MassIVE" id="Q53GD3"/>
<dbReference type="PaxDb" id="9606-ENSP00000229729"/>
<dbReference type="PeptideAtlas" id="Q53GD3"/>
<dbReference type="ProteomicsDB" id="19913"/>
<dbReference type="ProteomicsDB" id="5163"/>
<dbReference type="ProteomicsDB" id="5359"/>
<dbReference type="ProteomicsDB" id="62477">
    <molecule id="Q53GD3-1"/>
</dbReference>
<dbReference type="ProteomicsDB" id="62478">
    <molecule id="Q53GD3-2"/>
</dbReference>
<dbReference type="Antibodypedia" id="71079">
    <property type="antibodies" value="56 antibodies from 12 providers"/>
</dbReference>
<dbReference type="DNASU" id="80736"/>
<dbReference type="Ensembl" id="ENST00000229729.11">
    <molecule id="Q53GD3-1"/>
    <property type="protein sequence ID" value="ENSP00000229729.6"/>
    <property type="gene ID" value="ENSG00000204385.13"/>
</dbReference>
<dbReference type="Ensembl" id="ENST00000375562.8">
    <molecule id="Q53GD3-4"/>
    <property type="protein sequence ID" value="ENSP00000364712.4"/>
    <property type="gene ID" value="ENSG00000204385.13"/>
</dbReference>
<dbReference type="Ensembl" id="ENST00000383379.8">
    <molecule id="Q53GD3-1"/>
    <property type="protein sequence ID" value="ENSP00000372870.4"/>
    <property type="gene ID" value="ENSG00000206378.10"/>
</dbReference>
<dbReference type="Ensembl" id="ENST00000415517.6">
    <property type="protein sequence ID" value="ENSP00000414120.2"/>
    <property type="gene ID" value="ENSG00000229077.8"/>
</dbReference>
<dbReference type="Ensembl" id="ENST00000417894.6">
    <property type="protein sequence ID" value="ENSP00000389244.2"/>
    <property type="gene ID" value="ENSG00000235336.8"/>
</dbReference>
<dbReference type="Ensembl" id="ENST00000425238.6">
    <molecule id="Q53GD3-1"/>
    <property type="protein sequence ID" value="ENSP00000399161.2"/>
    <property type="gene ID" value="ENSG00000228263.8"/>
</dbReference>
<dbReference type="Ensembl" id="ENST00000442152.6">
    <property type="protein sequence ID" value="ENSP00000398852.2"/>
    <property type="gene ID" value="ENSG00000232180.8"/>
</dbReference>
<dbReference type="Ensembl" id="ENST00000453831.6">
    <molecule id="Q53GD3-1"/>
    <property type="protein sequence ID" value="ENSP00000393939.2"/>
    <property type="gene ID" value="ENSG00000231479.8"/>
</dbReference>
<dbReference type="Ensembl" id="ENST00000544672.5">
    <molecule id="Q53GD3-3"/>
    <property type="protein sequence ID" value="ENSP00000444109.1"/>
    <property type="gene ID" value="ENSG00000204385.13"/>
</dbReference>
<dbReference type="Ensembl" id="ENST00000546461.3">
    <molecule id="Q53GD3-3"/>
    <property type="protein sequence ID" value="ENSP00000449039.1"/>
    <property type="gene ID" value="ENSG00000231479.8"/>
</dbReference>
<dbReference type="Ensembl" id="ENST00000547493.1">
    <property type="protein sequence ID" value="ENSP00000449232.1"/>
    <property type="gene ID" value="ENSG00000229077.8"/>
</dbReference>
<dbReference type="Ensembl" id="ENST00000547684.1">
    <molecule id="Q53GD3-3"/>
    <property type="protein sequence ID" value="ENSP00000449180.1"/>
    <property type="gene ID" value="ENSG00000206378.10"/>
</dbReference>
<dbReference type="Ensembl" id="ENST00000548188.1">
    <molecule id="Q53GD3-3"/>
    <property type="protein sequence ID" value="ENSP00000447560.1"/>
    <property type="gene ID" value="ENSG00000228263.8"/>
</dbReference>
<dbReference type="Ensembl" id="ENST00000549663.5">
    <molecule id="Q53GD3-4"/>
    <property type="protein sequence ID" value="ENSP00000449642.1"/>
    <property type="gene ID" value="ENSG00000228263.8"/>
</dbReference>
<dbReference type="Ensembl" id="ENST00000549677.5">
    <molecule id="Q53GD3-4"/>
    <property type="protein sequence ID" value="ENSP00000449518.1"/>
    <property type="gene ID" value="ENSG00000206378.10"/>
</dbReference>
<dbReference type="Ensembl" id="ENST00000550401.2">
    <property type="protein sequence ID" value="ENSP00000448474.1"/>
    <property type="gene ID" value="ENSG00000235336.8"/>
</dbReference>
<dbReference type="Ensembl" id="ENST00000551168.3">
    <molecule id="Q53GD3-4"/>
    <property type="protein sequence ID" value="ENSP00000448088.1"/>
    <property type="gene ID" value="ENSG00000231479.8"/>
</dbReference>
<dbReference type="Ensembl" id="ENST00000553121.5">
    <property type="protein sequence ID" value="ENSP00000447704.1"/>
    <property type="gene ID" value="ENSG00000232180.8"/>
</dbReference>
<dbReference type="GeneID" id="80736"/>
<dbReference type="KEGG" id="hsa:80736"/>
<dbReference type="MANE-Select" id="ENST00000229729.11">
    <property type="protein sequence ID" value="ENSP00000229729.6"/>
    <property type="RefSeq nucleotide sequence ID" value="NM_025257.3"/>
    <property type="RefSeq protein sequence ID" value="NP_079533.2"/>
</dbReference>
<dbReference type="UCSC" id="uc010jti.4">
    <molecule id="Q53GD3-1"/>
    <property type="organism name" value="human"/>
</dbReference>
<dbReference type="AGR" id="HGNC:13941"/>
<dbReference type="CTD" id="80736"/>
<dbReference type="DisGeNET" id="80736"/>
<dbReference type="GeneCards" id="SLC44A4"/>
<dbReference type="HGNC" id="HGNC:13941">
    <property type="gene designation" value="SLC44A4"/>
</dbReference>
<dbReference type="HPA" id="ENSG00000204385">
    <property type="expression patterns" value="Tissue enhanced (intestine, prostate, stomach)"/>
</dbReference>
<dbReference type="MalaCards" id="SLC44A4"/>
<dbReference type="MIM" id="606107">
    <property type="type" value="gene"/>
</dbReference>
<dbReference type="MIM" id="617606">
    <property type="type" value="phenotype"/>
</dbReference>
<dbReference type="neXtProt" id="NX_Q53GD3"/>
<dbReference type="OpenTargets" id="ENSG00000204385"/>
<dbReference type="Orphanet" id="90635">
    <property type="disease" value="Rare autosomal dominant non-syndromic sensorineural deafness type DFNA"/>
</dbReference>
<dbReference type="PharmGKB" id="PA25930"/>
<dbReference type="VEuPathDB" id="HostDB:ENSG00000204385"/>
<dbReference type="eggNOG" id="KOG1362">
    <property type="taxonomic scope" value="Eukaryota"/>
</dbReference>
<dbReference type="GeneTree" id="ENSGT00940000160576"/>
<dbReference type="HOGENOM" id="CLU_017181_3_1_1"/>
<dbReference type="InParanoid" id="Q53GD3"/>
<dbReference type="OMA" id="FISLMRW"/>
<dbReference type="OrthoDB" id="420519at2759"/>
<dbReference type="PAN-GO" id="Q53GD3">
    <property type="GO annotations" value="4 GO annotations based on evolutionary models"/>
</dbReference>
<dbReference type="PhylomeDB" id="Q53GD3"/>
<dbReference type="TreeFam" id="TF313325"/>
<dbReference type="PathwayCommons" id="Q53GD3"/>
<dbReference type="Reactome" id="R-HSA-1483191">
    <property type="pathway name" value="Synthesis of PC"/>
</dbReference>
<dbReference type="Reactome" id="R-HSA-425366">
    <property type="pathway name" value="Transport of bile salts and organic acids, metal ions and amine compounds"/>
</dbReference>
<dbReference type="SignaLink" id="Q53GD3"/>
<dbReference type="BioGRID-ORCS" id="80736">
    <property type="hits" value="17 hits in 1147 CRISPR screens"/>
</dbReference>
<dbReference type="ChiTaRS" id="SLC44A4">
    <property type="organism name" value="human"/>
</dbReference>
<dbReference type="GeneWiki" id="SLC44A4"/>
<dbReference type="GenomeRNAi" id="80736"/>
<dbReference type="Pharos" id="Q53GD3">
    <property type="development level" value="Tbio"/>
</dbReference>
<dbReference type="PRO" id="PR:Q53GD3"/>
<dbReference type="Proteomes" id="UP000005640">
    <property type="component" value="Chromosome 6"/>
</dbReference>
<dbReference type="RNAct" id="Q53GD3">
    <property type="molecule type" value="protein"/>
</dbReference>
<dbReference type="Bgee" id="ENSG00000204385">
    <property type="expression patterns" value="Expressed in mucosa of transverse colon and 93 other cell types or tissues"/>
</dbReference>
<dbReference type="ExpressionAtlas" id="Q53GD3">
    <property type="expression patterns" value="baseline and differential"/>
</dbReference>
<dbReference type="GO" id="GO:0016324">
    <property type="term" value="C:apical plasma membrane"/>
    <property type="evidence" value="ECO:0000314"/>
    <property type="project" value="UniProtKB"/>
</dbReference>
<dbReference type="GO" id="GO:0070062">
    <property type="term" value="C:extracellular exosome"/>
    <property type="evidence" value="ECO:0007005"/>
    <property type="project" value="UniProtKB"/>
</dbReference>
<dbReference type="GO" id="GO:0005886">
    <property type="term" value="C:plasma membrane"/>
    <property type="evidence" value="ECO:0000314"/>
    <property type="project" value="UniProtKB"/>
</dbReference>
<dbReference type="GO" id="GO:0015297">
    <property type="term" value="F:antiporter activity"/>
    <property type="evidence" value="ECO:0007669"/>
    <property type="project" value="UniProtKB-KW"/>
</dbReference>
<dbReference type="GO" id="GO:0015220">
    <property type="term" value="F:choline transmembrane transporter activity"/>
    <property type="evidence" value="ECO:0000314"/>
    <property type="project" value="UniProtKB"/>
</dbReference>
<dbReference type="GO" id="GO:0090422">
    <property type="term" value="F:thiamine pyrophosphate transmembrane transporter activity"/>
    <property type="evidence" value="ECO:0000315"/>
    <property type="project" value="UniProtKB"/>
</dbReference>
<dbReference type="GO" id="GO:0008292">
    <property type="term" value="P:acetylcholine biosynthetic process"/>
    <property type="evidence" value="ECO:0000315"/>
    <property type="project" value="UniProtKB"/>
</dbReference>
<dbReference type="GO" id="GO:0061526">
    <property type="term" value="P:acetylcholine secretion"/>
    <property type="evidence" value="ECO:0000315"/>
    <property type="project" value="UniProtKB"/>
</dbReference>
<dbReference type="GO" id="GO:0015871">
    <property type="term" value="P:choline transport"/>
    <property type="evidence" value="ECO:0000314"/>
    <property type="project" value="UniProtKB"/>
</dbReference>
<dbReference type="GO" id="GO:0035675">
    <property type="term" value="P:neuromast hair cell development"/>
    <property type="evidence" value="ECO:0000250"/>
    <property type="project" value="UniProtKB"/>
</dbReference>
<dbReference type="GO" id="GO:0032475">
    <property type="term" value="P:otolith formation"/>
    <property type="evidence" value="ECO:0000250"/>
    <property type="project" value="UniProtKB"/>
</dbReference>
<dbReference type="GO" id="GO:0006656">
    <property type="term" value="P:phosphatidylcholine biosynthetic process"/>
    <property type="evidence" value="ECO:0000304"/>
    <property type="project" value="Reactome"/>
</dbReference>
<dbReference type="GO" id="GO:0030307">
    <property type="term" value="P:positive regulation of cell growth"/>
    <property type="evidence" value="ECO:0000315"/>
    <property type="project" value="UniProtKB"/>
</dbReference>
<dbReference type="GO" id="GO:0030974">
    <property type="term" value="P:thiamine pyrophosphate transmembrane transport"/>
    <property type="evidence" value="ECO:0000314"/>
    <property type="project" value="UniProtKB"/>
</dbReference>
<dbReference type="GO" id="GO:0055085">
    <property type="term" value="P:transmembrane transport"/>
    <property type="evidence" value="ECO:0000304"/>
    <property type="project" value="Reactome"/>
</dbReference>
<dbReference type="InterPro" id="IPR007603">
    <property type="entry name" value="Choline_transptr-like"/>
</dbReference>
<dbReference type="PANTHER" id="PTHR12385">
    <property type="entry name" value="CHOLINE TRANSPORTER-LIKE (SLC FAMILY 44)"/>
    <property type="match status" value="1"/>
</dbReference>
<dbReference type="PANTHER" id="PTHR12385:SF37">
    <property type="entry name" value="CHOLINE TRANSPORTER-LIKE PROTEIN 4"/>
    <property type="match status" value="1"/>
</dbReference>
<dbReference type="Pfam" id="PF04515">
    <property type="entry name" value="Choline_transpo"/>
    <property type="match status" value="1"/>
</dbReference>
<organism>
    <name type="scientific">Homo sapiens</name>
    <name type="common">Human</name>
    <dbReference type="NCBI Taxonomy" id="9606"/>
    <lineage>
        <taxon>Eukaryota</taxon>
        <taxon>Metazoa</taxon>
        <taxon>Chordata</taxon>
        <taxon>Craniata</taxon>
        <taxon>Vertebrata</taxon>
        <taxon>Euteleostomi</taxon>
        <taxon>Mammalia</taxon>
        <taxon>Eutheria</taxon>
        <taxon>Euarchontoglires</taxon>
        <taxon>Primates</taxon>
        <taxon>Haplorrhini</taxon>
        <taxon>Catarrhini</taxon>
        <taxon>Hominidae</taxon>
        <taxon>Homo</taxon>
    </lineage>
</organism>
<keyword id="KW-0025">Alternative splicing</keyword>
<keyword id="KW-0050">Antiport</keyword>
<keyword id="KW-1003">Cell membrane</keyword>
<keyword id="KW-0209">Deafness</keyword>
<keyword id="KW-0225">Disease variant</keyword>
<keyword id="KW-0325">Glycoprotein</keyword>
<keyword id="KW-0472">Membrane</keyword>
<keyword id="KW-1010">Non-syndromic deafness</keyword>
<keyword id="KW-1267">Proteomics identification</keyword>
<keyword id="KW-1185">Reference proteome</keyword>
<keyword id="KW-0812">Transmembrane</keyword>
<keyword id="KW-1133">Transmembrane helix</keyword>
<keyword id="KW-0813">Transport</keyword>